<reference key="1">
    <citation type="journal article" date="2001" name="Mol. Microbiol.">
        <title>Molecular cloning and genetic analysis of an indole-diterpene gene cluster from Penicillium paxilli.</title>
        <authorList>
            <person name="Young C."/>
            <person name="McMillan L."/>
            <person name="Telfer E."/>
            <person name="Scott B."/>
        </authorList>
    </citation>
    <scope>NUCLEOTIDE SEQUENCE [GENOMIC DNA]</scope>
    <scope>FUNCTION</scope>
    <source>
        <strain>PN2013</strain>
    </source>
</reference>
<reference key="2">
    <citation type="journal article" date="2013" name="Toxins">
        <title>Deletion and gene expression analyses define the paxilline biosynthetic gene cluster in Penicillium paxilli.</title>
        <authorList>
            <person name="Scott B."/>
            <person name="Young C.A."/>
            <person name="Saikia S."/>
            <person name="McMillan L.K."/>
            <person name="Monahan B.J."/>
            <person name="Koulman A."/>
            <person name="Astin J."/>
            <person name="Eaton C.J."/>
            <person name="Bryant A."/>
            <person name="Wrenn R.E."/>
            <person name="Finch S.C."/>
            <person name="Tapper B.A."/>
            <person name="Parker E.J."/>
            <person name="Jameson G.B."/>
        </authorList>
    </citation>
    <scope>NUCLEOTIDE SEQUENCE [GENOMIC DNA]</scope>
    <scope>FUNCTION</scope>
    <scope>DISRUPTION PHENOTYPE</scope>
    <source>
        <strain>PN2013</strain>
    </source>
</reference>
<reference key="3">
    <citation type="journal article" date="2006" name="FEBS Lett.">
        <title>Four gene products are required for the fungal synthesis of the indole-diterpene, paspaline.</title>
        <authorList>
            <person name="Saikia S."/>
            <person name="Parker E.J."/>
            <person name="Koulman A."/>
            <person name="Scott B."/>
        </authorList>
    </citation>
    <scope>FUNCTION</scope>
</reference>
<gene>
    <name evidence="6" type="primary">paxB</name>
</gene>
<proteinExistence type="inferred from homology"/>
<keyword id="KW-0456">Lyase</keyword>
<keyword id="KW-0472">Membrane</keyword>
<keyword id="KW-0812">Transmembrane</keyword>
<keyword id="KW-1133">Transmembrane helix</keyword>
<organism>
    <name type="scientific">Penicillium paxilli</name>
    <dbReference type="NCBI Taxonomy" id="70109"/>
    <lineage>
        <taxon>Eukaryota</taxon>
        <taxon>Fungi</taxon>
        <taxon>Dikarya</taxon>
        <taxon>Ascomycota</taxon>
        <taxon>Pezizomycotina</taxon>
        <taxon>Eurotiomycetes</taxon>
        <taxon>Eurotiomycetidae</taxon>
        <taxon>Eurotiales</taxon>
        <taxon>Aspergillaceae</taxon>
        <taxon>Penicillium</taxon>
    </lineage>
</organism>
<sequence length="243" mass="26917">MDGFDVSQAPPEYQAIKPLADLFVVGMGVGWIINYIGMVYISFKHETYGMSIMPLCCNIAWELVYCLVFPSKSPVERGVFWMGLLINFGVMYAAITFSSREWGHAPLVERNISLIFFVATMGFLSGHVALALEIGPALAYSWGAVICQLLLSVGGLSQLLCRGSTRGASYTLWASRFLGSTCTVGFAGLRWMYWSEAFGWLNSPLVLWSLVVFLSIDGFYGICFWYVDRNEKSLGISGPKKAN</sequence>
<accession>E3UBL6</accession>
<feature type="chain" id="PRO_0000436122" description="Terpene cyclase paxB">
    <location>
        <begin position="1"/>
        <end position="243"/>
    </location>
</feature>
<feature type="transmembrane region" description="Helical" evidence="2">
    <location>
        <begin position="23"/>
        <end position="43"/>
    </location>
</feature>
<feature type="transmembrane region" description="Helical" evidence="2">
    <location>
        <begin position="49"/>
        <end position="69"/>
    </location>
</feature>
<feature type="transmembrane region" description="Helical" evidence="2">
    <location>
        <begin position="78"/>
        <end position="98"/>
    </location>
</feature>
<feature type="transmembrane region" description="Helical" evidence="2">
    <location>
        <begin position="112"/>
        <end position="132"/>
    </location>
</feature>
<feature type="transmembrane region" description="Helical" evidence="2">
    <location>
        <begin position="134"/>
        <end position="154"/>
    </location>
</feature>
<feature type="transmembrane region" description="Helical" evidence="2">
    <location>
        <begin position="172"/>
        <end position="194"/>
    </location>
</feature>
<feature type="transmembrane region" description="Helical" evidence="2">
    <location>
        <begin position="205"/>
        <end position="225"/>
    </location>
</feature>
<name>PAXB_PENPX</name>
<protein>
    <recommendedName>
        <fullName evidence="1">Terpene cyclase paxB</fullName>
        <ecNumber evidence="1">4.2.3.-</ecNumber>
    </recommendedName>
    <alternativeName>
        <fullName evidence="6">Paxilline synthesis protein B</fullName>
    </alternativeName>
</protein>
<comment type="function">
    <text evidence="3 4 5">Terpene cyclase; part of the ATM2 gene cluster that mediates the biosynthesis of paxilline, a mycotoxin that acts as an inhibitor of mammalian maxi-K channels (PubMed:11169115, PubMed:16494875, PubMed:23949005). PaxG, the geranylgeranyl diphosphate (GGPP) synthase is proposed to catalyze the first step in paxilline biosynthesis (PubMed:16494875, PubMed:23949005). Condensation of indole-3-glycerol phosphate with GGPP by paxC then forms 3-geranylgeranylindole (3-GGI), followed by epoxidation and cyclization of this intermediate (by paxM and paxB) to form paspaline (PubMed:16494875, PubMed:23949005). Paspaline is subsequently converted to 13-desoxypaxilline by paxP, the latter being then converted to paxilline by paxQ (PubMed:23949005). Finally paxilline can be mono- and di-prenylated by paxD (PubMed:23949005).</text>
</comment>
<comment type="pathway">
    <text evidence="4 8 9">Secondary metabolite biosynthesis.</text>
</comment>
<comment type="subcellular location">
    <subcellularLocation>
        <location evidence="2">Membrane</location>
        <topology evidence="2">Multi-pass membrane protein</topology>
    </subcellularLocation>
</comment>
<comment type="disruption phenotype">
    <text evidence="5">Impairs the production of paxilline (PubMed:23949005).</text>
</comment>
<comment type="similarity">
    <text evidence="7">Belongs to the paxB family.</text>
</comment>
<evidence type="ECO:0000250" key="1">
    <source>
        <dbReference type="UniProtKB" id="Q0C8A7"/>
    </source>
</evidence>
<evidence type="ECO:0000255" key="2"/>
<evidence type="ECO:0000269" key="3">
    <source>
    </source>
</evidence>
<evidence type="ECO:0000269" key="4">
    <source>
    </source>
</evidence>
<evidence type="ECO:0000269" key="5">
    <source>
    </source>
</evidence>
<evidence type="ECO:0000303" key="6">
    <source>
    </source>
</evidence>
<evidence type="ECO:0000305" key="7"/>
<evidence type="ECO:0000305" key="8">
    <source>
    </source>
</evidence>
<evidence type="ECO:0000305" key="9">
    <source>
    </source>
</evidence>
<dbReference type="EC" id="4.2.3.-" evidence="1"/>
<dbReference type="EMBL" id="HM171111">
    <property type="protein sequence ID" value="ADO29934.1"/>
    <property type="molecule type" value="Genomic_DNA"/>
</dbReference>
<dbReference type="BioCyc" id="MetaCyc:MONOMER-18637"/>
<dbReference type="GO" id="GO:0016020">
    <property type="term" value="C:membrane"/>
    <property type="evidence" value="ECO:0007669"/>
    <property type="project" value="UniProtKB-SubCell"/>
</dbReference>
<dbReference type="GO" id="GO:0016829">
    <property type="term" value="F:lyase activity"/>
    <property type="evidence" value="ECO:0007669"/>
    <property type="project" value="UniProtKB-KW"/>
</dbReference>
<dbReference type="GO" id="GO:0140873">
    <property type="term" value="P:paxilline biosynthetic process"/>
    <property type="evidence" value="ECO:0000315"/>
    <property type="project" value="GO_Central"/>
</dbReference>
<dbReference type="InterPro" id="IPR039020">
    <property type="entry name" value="PaxB-like"/>
</dbReference>
<dbReference type="PANTHER" id="PTHR42038">
    <property type="match status" value="1"/>
</dbReference>
<dbReference type="PANTHER" id="PTHR42038:SF2">
    <property type="entry name" value="TERPENE CYCLASE AUSL"/>
    <property type="match status" value="1"/>
</dbReference>
<dbReference type="Pfam" id="PF25129">
    <property type="entry name" value="Pyr4-TMTC"/>
    <property type="match status" value="1"/>
</dbReference>